<name>PROA_PSESM</name>
<dbReference type="EC" id="1.2.1.41" evidence="1"/>
<dbReference type="EMBL" id="AE016853">
    <property type="protein sequence ID" value="AAO58258.1"/>
    <property type="molecule type" value="Genomic_DNA"/>
</dbReference>
<dbReference type="RefSeq" id="NP_794563.1">
    <property type="nucleotide sequence ID" value="NC_004578.1"/>
</dbReference>
<dbReference type="RefSeq" id="WP_011105195.1">
    <property type="nucleotide sequence ID" value="NC_004578.1"/>
</dbReference>
<dbReference type="SMR" id="Q87VV6"/>
<dbReference type="STRING" id="223283.PSPTO_4829"/>
<dbReference type="GeneID" id="1186512"/>
<dbReference type="KEGG" id="pst:PSPTO_4829"/>
<dbReference type="PATRIC" id="fig|223283.9.peg.4941"/>
<dbReference type="eggNOG" id="COG0014">
    <property type="taxonomic scope" value="Bacteria"/>
</dbReference>
<dbReference type="HOGENOM" id="CLU_030231_0_0_6"/>
<dbReference type="OrthoDB" id="9809970at2"/>
<dbReference type="PhylomeDB" id="Q87VV6"/>
<dbReference type="UniPathway" id="UPA00098">
    <property type="reaction ID" value="UER00360"/>
</dbReference>
<dbReference type="Proteomes" id="UP000002515">
    <property type="component" value="Chromosome"/>
</dbReference>
<dbReference type="GO" id="GO:0005737">
    <property type="term" value="C:cytoplasm"/>
    <property type="evidence" value="ECO:0007669"/>
    <property type="project" value="UniProtKB-SubCell"/>
</dbReference>
<dbReference type="GO" id="GO:0004350">
    <property type="term" value="F:glutamate-5-semialdehyde dehydrogenase activity"/>
    <property type="evidence" value="ECO:0007669"/>
    <property type="project" value="UniProtKB-UniRule"/>
</dbReference>
<dbReference type="GO" id="GO:0050661">
    <property type="term" value="F:NADP binding"/>
    <property type="evidence" value="ECO:0007669"/>
    <property type="project" value="InterPro"/>
</dbReference>
<dbReference type="GO" id="GO:0055129">
    <property type="term" value="P:L-proline biosynthetic process"/>
    <property type="evidence" value="ECO:0007669"/>
    <property type="project" value="UniProtKB-UniRule"/>
</dbReference>
<dbReference type="CDD" id="cd07079">
    <property type="entry name" value="ALDH_F18-19_ProA-GPR"/>
    <property type="match status" value="1"/>
</dbReference>
<dbReference type="FunFam" id="3.40.309.10:FF:000006">
    <property type="entry name" value="Gamma-glutamyl phosphate reductase"/>
    <property type="match status" value="1"/>
</dbReference>
<dbReference type="Gene3D" id="3.40.605.10">
    <property type="entry name" value="Aldehyde Dehydrogenase, Chain A, domain 1"/>
    <property type="match status" value="1"/>
</dbReference>
<dbReference type="Gene3D" id="3.40.309.10">
    <property type="entry name" value="Aldehyde Dehydrogenase, Chain A, domain 2"/>
    <property type="match status" value="1"/>
</dbReference>
<dbReference type="HAMAP" id="MF_00412">
    <property type="entry name" value="ProA"/>
    <property type="match status" value="1"/>
</dbReference>
<dbReference type="InterPro" id="IPR016161">
    <property type="entry name" value="Ald_DH/histidinol_DH"/>
</dbReference>
<dbReference type="InterPro" id="IPR016163">
    <property type="entry name" value="Ald_DH_C"/>
</dbReference>
<dbReference type="InterPro" id="IPR016162">
    <property type="entry name" value="Ald_DH_N"/>
</dbReference>
<dbReference type="InterPro" id="IPR015590">
    <property type="entry name" value="Aldehyde_DH_dom"/>
</dbReference>
<dbReference type="InterPro" id="IPR020593">
    <property type="entry name" value="G-glutamylP_reductase_CS"/>
</dbReference>
<dbReference type="InterPro" id="IPR012134">
    <property type="entry name" value="Glu-5-SA_DH"/>
</dbReference>
<dbReference type="InterPro" id="IPR000965">
    <property type="entry name" value="GPR_dom"/>
</dbReference>
<dbReference type="NCBIfam" id="NF001221">
    <property type="entry name" value="PRK00197.1"/>
    <property type="match status" value="1"/>
</dbReference>
<dbReference type="NCBIfam" id="TIGR00407">
    <property type="entry name" value="proA"/>
    <property type="match status" value="1"/>
</dbReference>
<dbReference type="PANTHER" id="PTHR11063:SF8">
    <property type="entry name" value="DELTA-1-PYRROLINE-5-CARBOXYLATE SYNTHASE"/>
    <property type="match status" value="1"/>
</dbReference>
<dbReference type="PANTHER" id="PTHR11063">
    <property type="entry name" value="GLUTAMATE SEMIALDEHYDE DEHYDROGENASE"/>
    <property type="match status" value="1"/>
</dbReference>
<dbReference type="Pfam" id="PF00171">
    <property type="entry name" value="Aldedh"/>
    <property type="match status" value="1"/>
</dbReference>
<dbReference type="PIRSF" id="PIRSF000151">
    <property type="entry name" value="GPR"/>
    <property type="match status" value="1"/>
</dbReference>
<dbReference type="SUPFAM" id="SSF53720">
    <property type="entry name" value="ALDH-like"/>
    <property type="match status" value="1"/>
</dbReference>
<dbReference type="PROSITE" id="PS01223">
    <property type="entry name" value="PROA"/>
    <property type="match status" value="1"/>
</dbReference>
<gene>
    <name evidence="1" type="primary">proA</name>
    <name type="ordered locus">PSPTO_4829</name>
</gene>
<feature type="chain" id="PRO_0000189769" description="Gamma-glutamyl phosphate reductase">
    <location>
        <begin position="1"/>
        <end position="421"/>
    </location>
</feature>
<comment type="function">
    <text evidence="1">Catalyzes the NADPH-dependent reduction of L-glutamate 5-phosphate into L-glutamate 5-semialdehyde and phosphate. The product spontaneously undergoes cyclization to form 1-pyrroline-5-carboxylate.</text>
</comment>
<comment type="catalytic activity">
    <reaction evidence="1">
        <text>L-glutamate 5-semialdehyde + phosphate + NADP(+) = L-glutamyl 5-phosphate + NADPH + H(+)</text>
        <dbReference type="Rhea" id="RHEA:19541"/>
        <dbReference type="ChEBI" id="CHEBI:15378"/>
        <dbReference type="ChEBI" id="CHEBI:43474"/>
        <dbReference type="ChEBI" id="CHEBI:57783"/>
        <dbReference type="ChEBI" id="CHEBI:58066"/>
        <dbReference type="ChEBI" id="CHEBI:58274"/>
        <dbReference type="ChEBI" id="CHEBI:58349"/>
        <dbReference type="EC" id="1.2.1.41"/>
    </reaction>
</comment>
<comment type="pathway">
    <text evidence="1">Amino-acid biosynthesis; L-proline biosynthesis; L-glutamate 5-semialdehyde from L-glutamate: step 2/2.</text>
</comment>
<comment type="subcellular location">
    <subcellularLocation>
        <location evidence="1">Cytoplasm</location>
    </subcellularLocation>
</comment>
<comment type="similarity">
    <text evidence="1">Belongs to the gamma-glutamyl phosphate reductase family.</text>
</comment>
<accession>Q87VV6</accession>
<proteinExistence type="inferred from homology"/>
<protein>
    <recommendedName>
        <fullName evidence="1">Gamma-glutamyl phosphate reductase</fullName>
        <shortName evidence="1">GPR</shortName>
        <ecNumber evidence="1">1.2.1.41</ecNumber>
    </recommendedName>
    <alternativeName>
        <fullName evidence="1">Glutamate-5-semialdehyde dehydrogenase</fullName>
    </alternativeName>
    <alternativeName>
        <fullName evidence="1">Glutamyl-gamma-semialdehyde dehydrogenase</fullName>
        <shortName evidence="1">GSA dehydrogenase</shortName>
    </alternativeName>
</protein>
<keyword id="KW-0028">Amino-acid biosynthesis</keyword>
<keyword id="KW-0963">Cytoplasm</keyword>
<keyword id="KW-0521">NADP</keyword>
<keyword id="KW-0560">Oxidoreductase</keyword>
<keyword id="KW-0641">Proline biosynthesis</keyword>
<keyword id="KW-1185">Reference proteome</keyword>
<reference key="1">
    <citation type="journal article" date="2003" name="Proc. Natl. Acad. Sci. U.S.A.">
        <title>The complete genome sequence of the Arabidopsis and tomato pathogen Pseudomonas syringae pv. tomato DC3000.</title>
        <authorList>
            <person name="Buell C.R."/>
            <person name="Joardar V."/>
            <person name="Lindeberg M."/>
            <person name="Selengut J."/>
            <person name="Paulsen I.T."/>
            <person name="Gwinn M.L."/>
            <person name="Dodson R.J."/>
            <person name="DeBoy R.T."/>
            <person name="Durkin A.S."/>
            <person name="Kolonay J.F."/>
            <person name="Madupu R."/>
            <person name="Daugherty S.C."/>
            <person name="Brinkac L.M."/>
            <person name="Beanan M.J."/>
            <person name="Haft D.H."/>
            <person name="Nelson W.C."/>
            <person name="Davidsen T.M."/>
            <person name="Zafar N."/>
            <person name="Zhou L."/>
            <person name="Liu J."/>
            <person name="Yuan Q."/>
            <person name="Khouri H.M."/>
            <person name="Fedorova N.B."/>
            <person name="Tran B."/>
            <person name="Russell D."/>
            <person name="Berry K.J."/>
            <person name="Utterback T.R."/>
            <person name="Van Aken S.E."/>
            <person name="Feldblyum T.V."/>
            <person name="D'Ascenzo M."/>
            <person name="Deng W.-L."/>
            <person name="Ramos A.R."/>
            <person name="Alfano J.R."/>
            <person name="Cartinhour S."/>
            <person name="Chatterjee A.K."/>
            <person name="Delaney T.P."/>
            <person name="Lazarowitz S.G."/>
            <person name="Martin G.B."/>
            <person name="Schneider D.J."/>
            <person name="Tang X."/>
            <person name="Bender C.L."/>
            <person name="White O."/>
            <person name="Fraser C.M."/>
            <person name="Collmer A."/>
        </authorList>
    </citation>
    <scope>NUCLEOTIDE SEQUENCE [LARGE SCALE GENOMIC DNA]</scope>
    <source>
        <strain>ATCC BAA-871 / DC3000</strain>
    </source>
</reference>
<organism>
    <name type="scientific">Pseudomonas syringae pv. tomato (strain ATCC BAA-871 / DC3000)</name>
    <dbReference type="NCBI Taxonomy" id="223283"/>
    <lineage>
        <taxon>Bacteria</taxon>
        <taxon>Pseudomonadati</taxon>
        <taxon>Pseudomonadota</taxon>
        <taxon>Gammaproteobacteria</taxon>
        <taxon>Pseudomonadales</taxon>
        <taxon>Pseudomonadaceae</taxon>
        <taxon>Pseudomonas</taxon>
    </lineage>
</organism>
<sequence>MTESVLDYMTRLGRAAREASRVIGRASTAQKNRALQATAAALDEARDELSAANALDLAYGQANGLEPAMLERLALTPARIDSMIVGLRQVASLADPVGAIRDMSYRPSGIQVGKMRVPLGVVGIIYESRPNVTIDAASLCLKSGNATILRGGSEAIHSNRAIAACIARGLAEAGLPAAVVQVVETTDRAAVGALITMPEYVDVIVPRGGKGLIERVSRDARVPVIKHLDGICHVYVSAHADLPKAQKIAFNAKTYRYGICGAMETLLVDQTIAADFLPAMAAQFREKGVELRGCERTRELIDVMPATEDDWHTEYLAAILSIRVVSGLDEAIEHINHYGSHHSDAIVSDHQSQIRRFMAEVDSSSVMVNAPTSFADGFEYGLGAEIGISTDKLHARGPVGLEGLTCEKYIVIGDGQLRGHA</sequence>
<evidence type="ECO:0000255" key="1">
    <source>
        <dbReference type="HAMAP-Rule" id="MF_00412"/>
    </source>
</evidence>